<organism>
    <name type="scientific">Neorickettsia sennetsu (strain ATCC VR-367 / Miyayama)</name>
    <name type="common">Ehrlichia sennetsu</name>
    <dbReference type="NCBI Taxonomy" id="222891"/>
    <lineage>
        <taxon>Bacteria</taxon>
        <taxon>Pseudomonadati</taxon>
        <taxon>Pseudomonadota</taxon>
        <taxon>Alphaproteobacteria</taxon>
        <taxon>Rickettsiales</taxon>
        <taxon>Anaplasmataceae</taxon>
        <taxon>Neorickettsia</taxon>
    </lineage>
</organism>
<reference key="1">
    <citation type="journal article" date="2006" name="PLoS Genet.">
        <title>Comparative genomics of emerging human ehrlichiosis agents.</title>
        <authorList>
            <person name="Dunning Hotopp J.C."/>
            <person name="Lin M."/>
            <person name="Madupu R."/>
            <person name="Crabtree J."/>
            <person name="Angiuoli S.V."/>
            <person name="Eisen J.A."/>
            <person name="Seshadri R."/>
            <person name="Ren Q."/>
            <person name="Wu M."/>
            <person name="Utterback T.R."/>
            <person name="Smith S."/>
            <person name="Lewis M."/>
            <person name="Khouri H."/>
            <person name="Zhang C."/>
            <person name="Niu H."/>
            <person name="Lin Q."/>
            <person name="Ohashi N."/>
            <person name="Zhi N."/>
            <person name="Nelson W.C."/>
            <person name="Brinkac L.M."/>
            <person name="Dodson R.J."/>
            <person name="Rosovitz M.J."/>
            <person name="Sundaram J.P."/>
            <person name="Daugherty S.C."/>
            <person name="Davidsen T."/>
            <person name="Durkin A.S."/>
            <person name="Gwinn M.L."/>
            <person name="Haft D.H."/>
            <person name="Selengut J.D."/>
            <person name="Sullivan S.A."/>
            <person name="Zafar N."/>
            <person name="Zhou L."/>
            <person name="Benahmed F."/>
            <person name="Forberger H."/>
            <person name="Halpin R."/>
            <person name="Mulligan S."/>
            <person name="Robinson J."/>
            <person name="White O."/>
            <person name="Rikihisa Y."/>
            <person name="Tettelin H."/>
        </authorList>
    </citation>
    <scope>NUCLEOTIDE SEQUENCE [LARGE SCALE GENOMIC DNA]</scope>
    <source>
        <strain>ATCC VR-367 / Miyayama</strain>
    </source>
</reference>
<proteinExistence type="inferred from homology"/>
<gene>
    <name evidence="1" type="primary">plsX</name>
    <name type="ordered locus">NSE_0632</name>
</gene>
<protein>
    <recommendedName>
        <fullName evidence="1">Phosphate acyltransferase</fullName>
        <ecNumber evidence="1">2.3.1.274</ecNumber>
    </recommendedName>
    <alternativeName>
        <fullName evidence="1">Acyl-ACP phosphotransacylase</fullName>
    </alternativeName>
    <alternativeName>
        <fullName evidence="1">Acyl-[acyl-carrier-protein]--phosphate acyltransferase</fullName>
    </alternativeName>
    <alternativeName>
        <fullName evidence="1">Phosphate-acyl-ACP acyltransferase</fullName>
    </alternativeName>
</protein>
<sequence length="343" mass="36395">MDQVGRKVVVALDTMGGDRAPDEILLGASVYLRQNPSSVFFRLFGNSSSIERCLSSKANVHLLESCEIIHAGDVVMSDDKLSSAVRKKGSSMYKAVQDVREKASQCVVSAGNTGAFMGISKILLGMLENIYRPAIVTTLPTKKGEVVVLDLGANLDCSSDVLYQFAFMGSAFAKAALGVKNPRVALLNVGVEENKGTDAVKEAFHLLNERTDEDFTFIGYAEPSDVLGGEVDVVVSDGFTGNVMLKTAESIFRLLRDDIVGATRTSLLSRLAGLVLAKSLKKSISRFNPDLRNGAMLIGVNGVAVKAHGGSDSVAFANAIGAAVKLVANNLNSKIIDSICTID</sequence>
<evidence type="ECO:0000255" key="1">
    <source>
        <dbReference type="HAMAP-Rule" id="MF_00019"/>
    </source>
</evidence>
<name>PLSX_NEOSM</name>
<comment type="function">
    <text evidence="1">Catalyzes the reversible formation of acyl-phosphate (acyl-PO(4)) from acyl-[acyl-carrier-protein] (acyl-ACP). This enzyme utilizes acyl-ACP as fatty acyl donor, but not acyl-CoA.</text>
</comment>
<comment type="catalytic activity">
    <reaction evidence="1">
        <text>a fatty acyl-[ACP] + phosphate = an acyl phosphate + holo-[ACP]</text>
        <dbReference type="Rhea" id="RHEA:42292"/>
        <dbReference type="Rhea" id="RHEA-COMP:9685"/>
        <dbReference type="Rhea" id="RHEA-COMP:14125"/>
        <dbReference type="ChEBI" id="CHEBI:43474"/>
        <dbReference type="ChEBI" id="CHEBI:59918"/>
        <dbReference type="ChEBI" id="CHEBI:64479"/>
        <dbReference type="ChEBI" id="CHEBI:138651"/>
        <dbReference type="EC" id="2.3.1.274"/>
    </reaction>
</comment>
<comment type="pathway">
    <text evidence="1">Lipid metabolism; phospholipid metabolism.</text>
</comment>
<comment type="subunit">
    <text evidence="1">Homodimer. Probably interacts with PlsY.</text>
</comment>
<comment type="subcellular location">
    <subcellularLocation>
        <location evidence="1">Cytoplasm</location>
    </subcellularLocation>
    <text evidence="1">Associated with the membrane possibly through PlsY.</text>
</comment>
<comment type="similarity">
    <text evidence="1">Belongs to the PlsX family.</text>
</comment>
<dbReference type="EC" id="2.3.1.274" evidence="1"/>
<dbReference type="EMBL" id="CP000237">
    <property type="protein sequence ID" value="ABD45597.1"/>
    <property type="molecule type" value="Genomic_DNA"/>
</dbReference>
<dbReference type="RefSeq" id="WP_011452016.1">
    <property type="nucleotide sequence ID" value="NC_007798.1"/>
</dbReference>
<dbReference type="SMR" id="Q2GDD6"/>
<dbReference type="STRING" id="222891.NSE_0632"/>
<dbReference type="KEGG" id="nse:NSE_0632"/>
<dbReference type="eggNOG" id="COG0416">
    <property type="taxonomic scope" value="Bacteria"/>
</dbReference>
<dbReference type="HOGENOM" id="CLU_039379_1_0_5"/>
<dbReference type="OrthoDB" id="9806408at2"/>
<dbReference type="UniPathway" id="UPA00085"/>
<dbReference type="Proteomes" id="UP000001942">
    <property type="component" value="Chromosome"/>
</dbReference>
<dbReference type="GO" id="GO:0005737">
    <property type="term" value="C:cytoplasm"/>
    <property type="evidence" value="ECO:0007669"/>
    <property type="project" value="UniProtKB-SubCell"/>
</dbReference>
<dbReference type="GO" id="GO:0043811">
    <property type="term" value="F:phosphate:acyl-[acyl carrier protein] acyltransferase activity"/>
    <property type="evidence" value="ECO:0007669"/>
    <property type="project" value="UniProtKB-UniRule"/>
</dbReference>
<dbReference type="GO" id="GO:0006633">
    <property type="term" value="P:fatty acid biosynthetic process"/>
    <property type="evidence" value="ECO:0007669"/>
    <property type="project" value="UniProtKB-UniRule"/>
</dbReference>
<dbReference type="GO" id="GO:0008654">
    <property type="term" value="P:phospholipid biosynthetic process"/>
    <property type="evidence" value="ECO:0007669"/>
    <property type="project" value="UniProtKB-KW"/>
</dbReference>
<dbReference type="Gene3D" id="3.40.718.10">
    <property type="entry name" value="Isopropylmalate Dehydrogenase"/>
    <property type="match status" value="1"/>
</dbReference>
<dbReference type="HAMAP" id="MF_00019">
    <property type="entry name" value="PlsX"/>
    <property type="match status" value="1"/>
</dbReference>
<dbReference type="InterPro" id="IPR003664">
    <property type="entry name" value="FA_synthesis"/>
</dbReference>
<dbReference type="InterPro" id="IPR012281">
    <property type="entry name" value="Phospholipid_synth_PlsX-like"/>
</dbReference>
<dbReference type="NCBIfam" id="TIGR00182">
    <property type="entry name" value="plsX"/>
    <property type="match status" value="1"/>
</dbReference>
<dbReference type="PANTHER" id="PTHR30100">
    <property type="entry name" value="FATTY ACID/PHOSPHOLIPID SYNTHESIS PROTEIN PLSX"/>
    <property type="match status" value="1"/>
</dbReference>
<dbReference type="PANTHER" id="PTHR30100:SF1">
    <property type="entry name" value="PHOSPHATE ACYLTRANSFERASE"/>
    <property type="match status" value="1"/>
</dbReference>
<dbReference type="Pfam" id="PF02504">
    <property type="entry name" value="FA_synthesis"/>
    <property type="match status" value="1"/>
</dbReference>
<dbReference type="PIRSF" id="PIRSF002465">
    <property type="entry name" value="Phsphlp_syn_PlsX"/>
    <property type="match status" value="1"/>
</dbReference>
<dbReference type="SUPFAM" id="SSF53659">
    <property type="entry name" value="Isocitrate/Isopropylmalate dehydrogenase-like"/>
    <property type="match status" value="1"/>
</dbReference>
<accession>Q2GDD6</accession>
<keyword id="KW-0963">Cytoplasm</keyword>
<keyword id="KW-0444">Lipid biosynthesis</keyword>
<keyword id="KW-0443">Lipid metabolism</keyword>
<keyword id="KW-0594">Phospholipid biosynthesis</keyword>
<keyword id="KW-1208">Phospholipid metabolism</keyword>
<keyword id="KW-0808">Transferase</keyword>
<feature type="chain" id="PRO_0000329242" description="Phosphate acyltransferase">
    <location>
        <begin position="1"/>
        <end position="343"/>
    </location>
</feature>